<protein>
    <recommendedName>
        <fullName evidence="1">Nuclear export protein</fullName>
        <shortName evidence="1">NEP</shortName>
    </recommendedName>
    <alternativeName>
        <fullName evidence="1">Non-structural protein 2</fullName>
        <shortName evidence="1">NS2</shortName>
    </alternativeName>
</protein>
<gene>
    <name evidence="1" type="primary">NS</name>
</gene>
<dbReference type="EMBL" id="U96744">
    <property type="protein sequence ID" value="AAB93948.1"/>
    <property type="molecule type" value="Genomic_RNA"/>
</dbReference>
<dbReference type="SMR" id="P69265"/>
<dbReference type="GO" id="GO:0042025">
    <property type="term" value="C:host cell nucleus"/>
    <property type="evidence" value="ECO:0007669"/>
    <property type="project" value="UniProtKB-SubCell"/>
</dbReference>
<dbReference type="GO" id="GO:0044423">
    <property type="term" value="C:virion component"/>
    <property type="evidence" value="ECO:0007669"/>
    <property type="project" value="UniProtKB-UniRule"/>
</dbReference>
<dbReference type="GO" id="GO:0039675">
    <property type="term" value="P:exit of virus from host cell nucleus through nuclear pore"/>
    <property type="evidence" value="ECO:0007669"/>
    <property type="project" value="UniProtKB-UniRule"/>
</dbReference>
<dbReference type="Gene3D" id="1.10.287.230">
    <property type="match status" value="1"/>
</dbReference>
<dbReference type="HAMAP" id="MF_04067">
    <property type="entry name" value="INFV_NEP"/>
    <property type="match status" value="1"/>
</dbReference>
<dbReference type="InterPro" id="IPR000968">
    <property type="entry name" value="Flu_NS2"/>
</dbReference>
<dbReference type="Pfam" id="PF00601">
    <property type="entry name" value="Flu_NS2"/>
    <property type="match status" value="1"/>
</dbReference>
<dbReference type="SUPFAM" id="SSF101156">
    <property type="entry name" value="Nonstructural protein ns2, Nep, M1-binding domain"/>
    <property type="match status" value="1"/>
</dbReference>
<organismHost>
    <name type="scientific">Aves</name>
    <dbReference type="NCBI Taxonomy" id="8782"/>
</organismHost>
<evidence type="ECO:0000255" key="1">
    <source>
        <dbReference type="HAMAP-Rule" id="MF_04067"/>
    </source>
</evidence>
<feature type="chain" id="PRO_0000078989" description="Nuclear export protein">
    <location>
        <begin position="1"/>
        <end position="121"/>
    </location>
</feature>
<feature type="short sequence motif" description="Nuclear export signal" evidence="1">
    <location>
        <begin position="12"/>
        <end position="21"/>
    </location>
</feature>
<feature type="short sequence motif" description="Nuclear export signal" evidence="1">
    <location>
        <begin position="85"/>
        <end position="94"/>
    </location>
</feature>
<reference key="1">
    <citation type="submission" date="1998-01" db="EMBL/GenBank/DDBJ databases">
        <title>Comparison of avian influenza nonstructural gene sequences.</title>
        <authorList>
            <person name="Suarez D.L."/>
        </authorList>
    </citation>
    <scope>NUCLEOTIDE SEQUENCE [GENOMIC RNA]</scope>
</reference>
<proteinExistence type="inferred from homology"/>
<keyword id="KW-0025">Alternative splicing</keyword>
<keyword id="KW-1048">Host nucleus</keyword>
<keyword id="KW-0945">Host-virus interaction</keyword>
<keyword id="KW-0813">Transport</keyword>
<keyword id="KW-0946">Virion</keyword>
<sequence length="121" mass="14291">MDSNTVSSFQDILVRMSKMQLESSSGDLNGMITQFESLKLYRDLLGEAVMRMGDLHLLQSRNGKWREQLSQKFEEIRWLIEEVRHKLKTTESSFEQITFMQALQLLLEVEQEIRTFSFQLI</sequence>
<accession>P69265</accession>
<accession>O57278</accession>
<name>NEP_I80AC</name>
<comment type="function">
    <text evidence="1">Mediates the nuclear export of encapsidated genomic RNAs (ribonucleoproteins, RNPs). Acts as an adapter between viral RNPs complexes and the nuclear export machinery of the cell. Possesses no intrinsic RNA-binding activity, but includes a C-terminal M1-binding domain. This domain is believed to allow recognition of RNPs bound to the protein M1. Since protein M1 is not available in large quantities before late stages of infection, such an indirect recognition mechanism probably ensures that genomic RNPs are not exported from the host nucleus until sufficient quantities of viral mRNA and progeny genomic RNA have been synthesized. Furthermore, the RNPs enter the host cytoplasm only when associated with the M1 protein that is necessary to guide them to the plasma membrane. May down-regulate viral RNA synthesis when overproduced.</text>
</comment>
<comment type="subunit">
    <text evidence="1">Interacts with protein M1. May interact with host nucleoporin RAB/HRB and exportin XPO1/CRM1.</text>
</comment>
<comment type="subcellular location">
    <subcellularLocation>
        <location evidence="1">Virion</location>
    </subcellularLocation>
    <subcellularLocation>
        <location evidence="1">Host nucleus</location>
    </subcellularLocation>
</comment>
<comment type="alternative products">
    <event type="alternative splicing"/>
    <isoform>
        <id>P69265-1</id>
        <name>NEP</name>
        <name>NS2</name>
        <sequence type="displayed"/>
    </isoform>
    <isoform>
        <id>O57306-1</id>
        <name>NS1</name>
        <sequence type="external"/>
    </isoform>
</comment>
<comment type="miscellaneous">
    <text>Average number present in a viral particle is estimated to be 130-200 molecules.</text>
</comment>
<comment type="similarity">
    <text evidence="1">Belongs to the influenza viruses NEP family.</text>
</comment>
<organism>
    <name type="scientific">Influenza A virus (strain A/Gull/Massachusetts/26/1980 H13N6)</name>
    <dbReference type="NCBI Taxonomy" id="385626"/>
    <lineage>
        <taxon>Viruses</taxon>
        <taxon>Riboviria</taxon>
        <taxon>Orthornavirae</taxon>
        <taxon>Negarnaviricota</taxon>
        <taxon>Polyploviricotina</taxon>
        <taxon>Insthoviricetes</taxon>
        <taxon>Articulavirales</taxon>
        <taxon>Orthomyxoviridae</taxon>
        <taxon>Alphainfluenzavirus</taxon>
        <taxon>Alphainfluenzavirus influenzae</taxon>
        <taxon>Influenza A virus</taxon>
    </lineage>
</organism>